<proteinExistence type="inferred from homology"/>
<organism>
    <name type="scientific">Brucella ovis (strain ATCC 25840 / 63/290 / NCTC 10512)</name>
    <dbReference type="NCBI Taxonomy" id="444178"/>
    <lineage>
        <taxon>Bacteria</taxon>
        <taxon>Pseudomonadati</taxon>
        <taxon>Pseudomonadota</taxon>
        <taxon>Alphaproteobacteria</taxon>
        <taxon>Hyphomicrobiales</taxon>
        <taxon>Brucellaceae</taxon>
        <taxon>Brucella/Ochrobactrum group</taxon>
        <taxon>Brucella</taxon>
    </lineage>
</organism>
<protein>
    <recommendedName>
        <fullName evidence="1">Phosphate acyltransferase</fullName>
        <ecNumber evidence="1">2.3.1.274</ecNumber>
    </recommendedName>
    <alternativeName>
        <fullName evidence="1">Acyl-ACP phosphotransacylase</fullName>
    </alternativeName>
    <alternativeName>
        <fullName evidence="1">Acyl-[acyl-carrier-protein]--phosphate acyltransferase</fullName>
    </alternativeName>
    <alternativeName>
        <fullName evidence="1">Phosphate-acyl-ACP acyltransferase</fullName>
    </alternativeName>
</protein>
<keyword id="KW-0963">Cytoplasm</keyword>
<keyword id="KW-0444">Lipid biosynthesis</keyword>
<keyword id="KW-0443">Lipid metabolism</keyword>
<keyword id="KW-0594">Phospholipid biosynthesis</keyword>
<keyword id="KW-1208">Phospholipid metabolism</keyword>
<keyword id="KW-0808">Transferase</keyword>
<name>PLSX_BRUO2</name>
<sequence>MIKISIDAMGGDFGPEVVIPGAAKAFERHPDIRFIFFGLPAQVEPVLARYPKLKEASEFRASEVAIGMDDKPSQALRAGRGKSSMWQAIEAVKTGDADACVSAGNTGALMAMSKFCLRMMSDVERPAIAGIWPTLRGESIVLDIGATIGADARQLVDYAVMGAGMARALFEVRKPTVGLLNVGTEEVKGLDEIKEAGQILCDTPLDGLEYSGFVEGNDIGKGTVDVVVTEGFTGNIALKTAEGTARQMAELLRQAMSRTLLAKIGHVFAKGAFDRLREKMDPNKVNGGVFLGLSGIVIKSHGGANAEGFCSAVEVGYDMVRNRLLEKIEADLAHFHHSHSHVSSKA</sequence>
<feature type="chain" id="PRO_1000001725" description="Phosphate acyltransferase">
    <location>
        <begin position="1"/>
        <end position="346"/>
    </location>
</feature>
<accession>A5VPV7</accession>
<reference key="1">
    <citation type="journal article" date="2009" name="PLoS ONE">
        <title>Genome degradation in Brucella ovis corresponds with narrowing of its host range and tissue tropism.</title>
        <authorList>
            <person name="Tsolis R.M."/>
            <person name="Seshadri R."/>
            <person name="Santos R.L."/>
            <person name="Sangari F.J."/>
            <person name="Lobo J.M."/>
            <person name="de Jong M.F."/>
            <person name="Ren Q."/>
            <person name="Myers G."/>
            <person name="Brinkac L.M."/>
            <person name="Nelson W.C."/>
            <person name="Deboy R.T."/>
            <person name="Angiuoli S."/>
            <person name="Khouri H."/>
            <person name="Dimitrov G."/>
            <person name="Robinson J.R."/>
            <person name="Mulligan S."/>
            <person name="Walker R.L."/>
            <person name="Elzer P.E."/>
            <person name="Hassan K.A."/>
            <person name="Paulsen I.T."/>
        </authorList>
    </citation>
    <scope>NUCLEOTIDE SEQUENCE [LARGE SCALE GENOMIC DNA]</scope>
    <source>
        <strain>ATCC 25840 / 63/290 / NCTC 10512</strain>
    </source>
</reference>
<gene>
    <name evidence="1" type="primary">plsX</name>
    <name type="ordered locus">BOV_0768</name>
</gene>
<evidence type="ECO:0000255" key="1">
    <source>
        <dbReference type="HAMAP-Rule" id="MF_00019"/>
    </source>
</evidence>
<comment type="function">
    <text evidence="1">Catalyzes the reversible formation of acyl-phosphate (acyl-PO(4)) from acyl-[acyl-carrier-protein] (acyl-ACP). This enzyme utilizes acyl-ACP as fatty acyl donor, but not acyl-CoA.</text>
</comment>
<comment type="catalytic activity">
    <reaction evidence="1">
        <text>a fatty acyl-[ACP] + phosphate = an acyl phosphate + holo-[ACP]</text>
        <dbReference type="Rhea" id="RHEA:42292"/>
        <dbReference type="Rhea" id="RHEA-COMP:9685"/>
        <dbReference type="Rhea" id="RHEA-COMP:14125"/>
        <dbReference type="ChEBI" id="CHEBI:43474"/>
        <dbReference type="ChEBI" id="CHEBI:59918"/>
        <dbReference type="ChEBI" id="CHEBI:64479"/>
        <dbReference type="ChEBI" id="CHEBI:138651"/>
        <dbReference type="EC" id="2.3.1.274"/>
    </reaction>
</comment>
<comment type="pathway">
    <text evidence="1">Lipid metabolism; phospholipid metabolism.</text>
</comment>
<comment type="subunit">
    <text evidence="1">Homodimer. Probably interacts with PlsY.</text>
</comment>
<comment type="subcellular location">
    <subcellularLocation>
        <location evidence="1">Cytoplasm</location>
    </subcellularLocation>
    <text evidence="1">Associated with the membrane possibly through PlsY.</text>
</comment>
<comment type="similarity">
    <text evidence="1">Belongs to the PlsX family.</text>
</comment>
<dbReference type="EC" id="2.3.1.274" evidence="1"/>
<dbReference type="EMBL" id="CP000708">
    <property type="protein sequence ID" value="ABQ60607.1"/>
    <property type="molecule type" value="Genomic_DNA"/>
</dbReference>
<dbReference type="RefSeq" id="WP_006012174.1">
    <property type="nucleotide sequence ID" value="NC_009505.1"/>
</dbReference>
<dbReference type="SMR" id="A5VPV7"/>
<dbReference type="GeneID" id="45124212"/>
<dbReference type="KEGG" id="bov:BOV_0768"/>
<dbReference type="HOGENOM" id="CLU_039379_1_0_5"/>
<dbReference type="PhylomeDB" id="A5VPV7"/>
<dbReference type="UniPathway" id="UPA00085"/>
<dbReference type="Proteomes" id="UP000006383">
    <property type="component" value="Chromosome I"/>
</dbReference>
<dbReference type="GO" id="GO:0005737">
    <property type="term" value="C:cytoplasm"/>
    <property type="evidence" value="ECO:0007669"/>
    <property type="project" value="UniProtKB-SubCell"/>
</dbReference>
<dbReference type="GO" id="GO:0043811">
    <property type="term" value="F:phosphate:acyl-[acyl carrier protein] acyltransferase activity"/>
    <property type="evidence" value="ECO:0007669"/>
    <property type="project" value="UniProtKB-UniRule"/>
</dbReference>
<dbReference type="GO" id="GO:0006633">
    <property type="term" value="P:fatty acid biosynthetic process"/>
    <property type="evidence" value="ECO:0007669"/>
    <property type="project" value="UniProtKB-UniRule"/>
</dbReference>
<dbReference type="GO" id="GO:0008654">
    <property type="term" value="P:phospholipid biosynthetic process"/>
    <property type="evidence" value="ECO:0007669"/>
    <property type="project" value="UniProtKB-KW"/>
</dbReference>
<dbReference type="Gene3D" id="3.40.718.10">
    <property type="entry name" value="Isopropylmalate Dehydrogenase"/>
    <property type="match status" value="1"/>
</dbReference>
<dbReference type="HAMAP" id="MF_00019">
    <property type="entry name" value="PlsX"/>
    <property type="match status" value="1"/>
</dbReference>
<dbReference type="InterPro" id="IPR003664">
    <property type="entry name" value="FA_synthesis"/>
</dbReference>
<dbReference type="InterPro" id="IPR012281">
    <property type="entry name" value="Phospholipid_synth_PlsX-like"/>
</dbReference>
<dbReference type="NCBIfam" id="TIGR00182">
    <property type="entry name" value="plsX"/>
    <property type="match status" value="1"/>
</dbReference>
<dbReference type="PANTHER" id="PTHR30100">
    <property type="entry name" value="FATTY ACID/PHOSPHOLIPID SYNTHESIS PROTEIN PLSX"/>
    <property type="match status" value="1"/>
</dbReference>
<dbReference type="PANTHER" id="PTHR30100:SF1">
    <property type="entry name" value="PHOSPHATE ACYLTRANSFERASE"/>
    <property type="match status" value="1"/>
</dbReference>
<dbReference type="Pfam" id="PF02504">
    <property type="entry name" value="FA_synthesis"/>
    <property type="match status" value="1"/>
</dbReference>
<dbReference type="PIRSF" id="PIRSF002465">
    <property type="entry name" value="Phsphlp_syn_PlsX"/>
    <property type="match status" value="1"/>
</dbReference>
<dbReference type="SUPFAM" id="SSF53659">
    <property type="entry name" value="Isocitrate/Isopropylmalate dehydrogenase-like"/>
    <property type="match status" value="1"/>
</dbReference>